<evidence type="ECO:0000255" key="1">
    <source>
        <dbReference type="HAMAP-Rule" id="MF_01537"/>
    </source>
</evidence>
<dbReference type="EC" id="2.4.2.1" evidence="1"/>
<dbReference type="EC" id="2.4.2.2" evidence="1"/>
<dbReference type="EMBL" id="CP001657">
    <property type="protein sequence ID" value="ACT12047.1"/>
    <property type="molecule type" value="Genomic_DNA"/>
</dbReference>
<dbReference type="RefSeq" id="WP_012773683.1">
    <property type="nucleotide sequence ID" value="NC_012917.1"/>
</dbReference>
<dbReference type="SMR" id="C6DB05"/>
<dbReference type="STRING" id="561230.PC1_0998"/>
<dbReference type="GeneID" id="67795225"/>
<dbReference type="KEGG" id="pct:PC1_0998"/>
<dbReference type="eggNOG" id="COG3123">
    <property type="taxonomic scope" value="Bacteria"/>
</dbReference>
<dbReference type="HOGENOM" id="CLU_157874_0_0_6"/>
<dbReference type="OrthoDB" id="9793848at2"/>
<dbReference type="Proteomes" id="UP000002736">
    <property type="component" value="Chromosome"/>
</dbReference>
<dbReference type="GO" id="GO:0005829">
    <property type="term" value="C:cytosol"/>
    <property type="evidence" value="ECO:0007669"/>
    <property type="project" value="TreeGrafter"/>
</dbReference>
<dbReference type="GO" id="GO:0047975">
    <property type="term" value="F:guanosine phosphorylase activity"/>
    <property type="evidence" value="ECO:0007669"/>
    <property type="project" value="UniProtKB-EC"/>
</dbReference>
<dbReference type="GO" id="GO:0004731">
    <property type="term" value="F:purine-nucleoside phosphorylase activity"/>
    <property type="evidence" value="ECO:0007669"/>
    <property type="project" value="UniProtKB-UniRule"/>
</dbReference>
<dbReference type="GO" id="GO:0009032">
    <property type="term" value="F:thymidine phosphorylase activity"/>
    <property type="evidence" value="ECO:0007669"/>
    <property type="project" value="UniProtKB-EC"/>
</dbReference>
<dbReference type="GO" id="GO:0004850">
    <property type="term" value="F:uridine phosphorylase activity"/>
    <property type="evidence" value="ECO:0007669"/>
    <property type="project" value="UniProtKB-EC"/>
</dbReference>
<dbReference type="CDD" id="cd20296">
    <property type="entry name" value="cupin_PpnP-like"/>
    <property type="match status" value="1"/>
</dbReference>
<dbReference type="FunFam" id="2.60.120.10:FF:000016">
    <property type="entry name" value="Pyrimidine/purine nucleoside phosphorylase"/>
    <property type="match status" value="1"/>
</dbReference>
<dbReference type="Gene3D" id="2.60.120.10">
    <property type="entry name" value="Jelly Rolls"/>
    <property type="match status" value="1"/>
</dbReference>
<dbReference type="HAMAP" id="MF_01537">
    <property type="entry name" value="Nucleos_phosphorylase_PpnP"/>
    <property type="match status" value="1"/>
</dbReference>
<dbReference type="InterPro" id="IPR009664">
    <property type="entry name" value="Ppnp"/>
</dbReference>
<dbReference type="InterPro" id="IPR014710">
    <property type="entry name" value="RmlC-like_jellyroll"/>
</dbReference>
<dbReference type="InterPro" id="IPR011051">
    <property type="entry name" value="RmlC_Cupin_sf"/>
</dbReference>
<dbReference type="NCBIfam" id="NF007875">
    <property type="entry name" value="PRK10579.1"/>
    <property type="match status" value="1"/>
</dbReference>
<dbReference type="PANTHER" id="PTHR36540">
    <property type="entry name" value="PYRIMIDINE/PURINE NUCLEOSIDE PHOSPHORYLASE"/>
    <property type="match status" value="1"/>
</dbReference>
<dbReference type="PANTHER" id="PTHR36540:SF1">
    <property type="entry name" value="PYRIMIDINE_PURINE NUCLEOSIDE PHOSPHORYLASE"/>
    <property type="match status" value="1"/>
</dbReference>
<dbReference type="Pfam" id="PF06865">
    <property type="entry name" value="Ppnp"/>
    <property type="match status" value="1"/>
</dbReference>
<dbReference type="SUPFAM" id="SSF51182">
    <property type="entry name" value="RmlC-like cupins"/>
    <property type="match status" value="1"/>
</dbReference>
<organism>
    <name type="scientific">Pectobacterium carotovorum subsp. carotovorum (strain PC1)</name>
    <dbReference type="NCBI Taxonomy" id="561230"/>
    <lineage>
        <taxon>Bacteria</taxon>
        <taxon>Pseudomonadati</taxon>
        <taxon>Pseudomonadota</taxon>
        <taxon>Gammaproteobacteria</taxon>
        <taxon>Enterobacterales</taxon>
        <taxon>Pectobacteriaceae</taxon>
        <taxon>Pectobacterium</taxon>
    </lineage>
</organism>
<accession>C6DB05</accession>
<sequence length="94" mass="10145">MLNVNEYFAGKVKSIGFEGDGIGRASVGVMDAGEYTFGTGQPEEMTVITGALKVLLPGAPDWQVFTPGETFFVPGKSEFNLQVVEPTSYLCKYL</sequence>
<protein>
    <recommendedName>
        <fullName evidence="1">Pyrimidine/purine nucleoside phosphorylase</fullName>
        <ecNumber evidence="1">2.4.2.1</ecNumber>
        <ecNumber evidence="1">2.4.2.2</ecNumber>
    </recommendedName>
    <alternativeName>
        <fullName evidence="1">Adenosine phosphorylase</fullName>
    </alternativeName>
    <alternativeName>
        <fullName evidence="1">Cytidine phosphorylase</fullName>
    </alternativeName>
    <alternativeName>
        <fullName evidence="1">Guanosine phosphorylase</fullName>
    </alternativeName>
    <alternativeName>
        <fullName evidence="1">Inosine phosphorylase</fullName>
    </alternativeName>
    <alternativeName>
        <fullName evidence="1">Thymidine phosphorylase</fullName>
    </alternativeName>
    <alternativeName>
        <fullName evidence="1">Uridine phosphorylase</fullName>
    </alternativeName>
    <alternativeName>
        <fullName evidence="1">Xanthosine phosphorylase</fullName>
    </alternativeName>
</protein>
<comment type="function">
    <text evidence="1">Catalyzes the phosphorolysis of diverse nucleosides, yielding D-ribose 1-phosphate and the respective free bases. Can use uridine, adenosine, guanosine, cytidine, thymidine, inosine and xanthosine as substrates. Also catalyzes the reverse reactions.</text>
</comment>
<comment type="catalytic activity">
    <reaction evidence="1">
        <text>a purine D-ribonucleoside + phosphate = a purine nucleobase + alpha-D-ribose 1-phosphate</text>
        <dbReference type="Rhea" id="RHEA:19805"/>
        <dbReference type="ChEBI" id="CHEBI:26386"/>
        <dbReference type="ChEBI" id="CHEBI:43474"/>
        <dbReference type="ChEBI" id="CHEBI:57720"/>
        <dbReference type="ChEBI" id="CHEBI:142355"/>
        <dbReference type="EC" id="2.4.2.1"/>
    </reaction>
</comment>
<comment type="catalytic activity">
    <reaction evidence="1">
        <text>adenosine + phosphate = alpha-D-ribose 1-phosphate + adenine</text>
        <dbReference type="Rhea" id="RHEA:27642"/>
        <dbReference type="ChEBI" id="CHEBI:16335"/>
        <dbReference type="ChEBI" id="CHEBI:16708"/>
        <dbReference type="ChEBI" id="CHEBI:43474"/>
        <dbReference type="ChEBI" id="CHEBI:57720"/>
        <dbReference type="EC" id="2.4.2.1"/>
    </reaction>
</comment>
<comment type="catalytic activity">
    <reaction evidence="1">
        <text>cytidine + phosphate = cytosine + alpha-D-ribose 1-phosphate</text>
        <dbReference type="Rhea" id="RHEA:52540"/>
        <dbReference type="ChEBI" id="CHEBI:16040"/>
        <dbReference type="ChEBI" id="CHEBI:17562"/>
        <dbReference type="ChEBI" id="CHEBI:43474"/>
        <dbReference type="ChEBI" id="CHEBI:57720"/>
        <dbReference type="EC" id="2.4.2.2"/>
    </reaction>
</comment>
<comment type="catalytic activity">
    <reaction evidence="1">
        <text>guanosine + phosphate = alpha-D-ribose 1-phosphate + guanine</text>
        <dbReference type="Rhea" id="RHEA:13233"/>
        <dbReference type="ChEBI" id="CHEBI:16235"/>
        <dbReference type="ChEBI" id="CHEBI:16750"/>
        <dbReference type="ChEBI" id="CHEBI:43474"/>
        <dbReference type="ChEBI" id="CHEBI:57720"/>
        <dbReference type="EC" id="2.4.2.1"/>
    </reaction>
</comment>
<comment type="catalytic activity">
    <reaction evidence="1">
        <text>inosine + phosphate = alpha-D-ribose 1-phosphate + hypoxanthine</text>
        <dbReference type="Rhea" id="RHEA:27646"/>
        <dbReference type="ChEBI" id="CHEBI:17368"/>
        <dbReference type="ChEBI" id="CHEBI:17596"/>
        <dbReference type="ChEBI" id="CHEBI:43474"/>
        <dbReference type="ChEBI" id="CHEBI:57720"/>
        <dbReference type="EC" id="2.4.2.1"/>
    </reaction>
</comment>
<comment type="catalytic activity">
    <reaction evidence="1">
        <text>thymidine + phosphate = 2-deoxy-alpha-D-ribose 1-phosphate + thymine</text>
        <dbReference type="Rhea" id="RHEA:16037"/>
        <dbReference type="ChEBI" id="CHEBI:17748"/>
        <dbReference type="ChEBI" id="CHEBI:17821"/>
        <dbReference type="ChEBI" id="CHEBI:43474"/>
        <dbReference type="ChEBI" id="CHEBI:57259"/>
        <dbReference type="EC" id="2.4.2.2"/>
    </reaction>
</comment>
<comment type="catalytic activity">
    <reaction evidence="1">
        <text>uridine + phosphate = alpha-D-ribose 1-phosphate + uracil</text>
        <dbReference type="Rhea" id="RHEA:24388"/>
        <dbReference type="ChEBI" id="CHEBI:16704"/>
        <dbReference type="ChEBI" id="CHEBI:17568"/>
        <dbReference type="ChEBI" id="CHEBI:43474"/>
        <dbReference type="ChEBI" id="CHEBI:57720"/>
        <dbReference type="EC" id="2.4.2.2"/>
    </reaction>
</comment>
<comment type="catalytic activity">
    <reaction evidence="1">
        <text>xanthosine + phosphate = alpha-D-ribose 1-phosphate + xanthine</text>
        <dbReference type="Rhea" id="RHEA:27638"/>
        <dbReference type="ChEBI" id="CHEBI:17712"/>
        <dbReference type="ChEBI" id="CHEBI:18107"/>
        <dbReference type="ChEBI" id="CHEBI:43474"/>
        <dbReference type="ChEBI" id="CHEBI:57720"/>
        <dbReference type="EC" id="2.4.2.1"/>
    </reaction>
</comment>
<comment type="similarity">
    <text evidence="1">Belongs to the nucleoside phosphorylase PpnP family.</text>
</comment>
<gene>
    <name evidence="1" type="primary">ppnP</name>
    <name type="ordered locus">PC1_0998</name>
</gene>
<reference key="1">
    <citation type="submission" date="2009-07" db="EMBL/GenBank/DDBJ databases">
        <title>Complete sequence of Pectobacterium carotovorum subsp. carotovorum PC1.</title>
        <authorList>
            <consortium name="US DOE Joint Genome Institute"/>
            <person name="Lucas S."/>
            <person name="Copeland A."/>
            <person name="Lapidus A."/>
            <person name="Glavina del Rio T."/>
            <person name="Tice H."/>
            <person name="Bruce D."/>
            <person name="Goodwin L."/>
            <person name="Pitluck S."/>
            <person name="Munk A.C."/>
            <person name="Brettin T."/>
            <person name="Detter J.C."/>
            <person name="Han C."/>
            <person name="Tapia R."/>
            <person name="Larimer F."/>
            <person name="Land M."/>
            <person name="Hauser L."/>
            <person name="Kyrpides N."/>
            <person name="Mikhailova N."/>
            <person name="Balakrishnan V."/>
            <person name="Glasner J."/>
            <person name="Perna N.T."/>
        </authorList>
    </citation>
    <scope>NUCLEOTIDE SEQUENCE [LARGE SCALE GENOMIC DNA]</scope>
    <source>
        <strain>PC1</strain>
    </source>
</reference>
<keyword id="KW-0328">Glycosyltransferase</keyword>
<keyword id="KW-0808">Transferase</keyword>
<feature type="chain" id="PRO_1000215415" description="Pyrimidine/purine nucleoside phosphorylase">
    <location>
        <begin position="1"/>
        <end position="94"/>
    </location>
</feature>
<proteinExistence type="inferred from homology"/>
<name>PPNP_PECCP</name>